<dbReference type="EC" id="3.1.1.29" evidence="1"/>
<dbReference type="EMBL" id="CP000915">
    <property type="protein sequence ID" value="ACD31059.1"/>
    <property type="molecule type" value="Genomic_DNA"/>
</dbReference>
<dbReference type="SMR" id="B2SH51"/>
<dbReference type="KEGG" id="ftm:FTM_1178"/>
<dbReference type="HOGENOM" id="CLU_062456_3_1_6"/>
<dbReference type="GO" id="GO:0005737">
    <property type="term" value="C:cytoplasm"/>
    <property type="evidence" value="ECO:0007669"/>
    <property type="project" value="UniProtKB-SubCell"/>
</dbReference>
<dbReference type="GO" id="GO:0004045">
    <property type="term" value="F:peptidyl-tRNA hydrolase activity"/>
    <property type="evidence" value="ECO:0007669"/>
    <property type="project" value="UniProtKB-UniRule"/>
</dbReference>
<dbReference type="GO" id="GO:0000049">
    <property type="term" value="F:tRNA binding"/>
    <property type="evidence" value="ECO:0007669"/>
    <property type="project" value="UniProtKB-UniRule"/>
</dbReference>
<dbReference type="GO" id="GO:0006515">
    <property type="term" value="P:protein quality control for misfolded or incompletely synthesized proteins"/>
    <property type="evidence" value="ECO:0007669"/>
    <property type="project" value="UniProtKB-UniRule"/>
</dbReference>
<dbReference type="GO" id="GO:0072344">
    <property type="term" value="P:rescue of stalled ribosome"/>
    <property type="evidence" value="ECO:0007669"/>
    <property type="project" value="UniProtKB-UniRule"/>
</dbReference>
<dbReference type="CDD" id="cd00462">
    <property type="entry name" value="PTH"/>
    <property type="match status" value="1"/>
</dbReference>
<dbReference type="FunFam" id="3.40.50.1470:FF:000001">
    <property type="entry name" value="Peptidyl-tRNA hydrolase"/>
    <property type="match status" value="1"/>
</dbReference>
<dbReference type="Gene3D" id="3.40.50.1470">
    <property type="entry name" value="Peptidyl-tRNA hydrolase"/>
    <property type="match status" value="1"/>
</dbReference>
<dbReference type="HAMAP" id="MF_00083">
    <property type="entry name" value="Pept_tRNA_hydro_bact"/>
    <property type="match status" value="1"/>
</dbReference>
<dbReference type="InterPro" id="IPR001328">
    <property type="entry name" value="Pept_tRNA_hydro"/>
</dbReference>
<dbReference type="InterPro" id="IPR018171">
    <property type="entry name" value="Pept_tRNA_hydro_CS"/>
</dbReference>
<dbReference type="InterPro" id="IPR036416">
    <property type="entry name" value="Pept_tRNA_hydro_sf"/>
</dbReference>
<dbReference type="NCBIfam" id="TIGR00447">
    <property type="entry name" value="pth"/>
    <property type="match status" value="1"/>
</dbReference>
<dbReference type="PANTHER" id="PTHR17224">
    <property type="entry name" value="PEPTIDYL-TRNA HYDROLASE"/>
    <property type="match status" value="1"/>
</dbReference>
<dbReference type="PANTHER" id="PTHR17224:SF1">
    <property type="entry name" value="PEPTIDYL-TRNA HYDROLASE"/>
    <property type="match status" value="1"/>
</dbReference>
<dbReference type="Pfam" id="PF01195">
    <property type="entry name" value="Pept_tRNA_hydro"/>
    <property type="match status" value="1"/>
</dbReference>
<dbReference type="SUPFAM" id="SSF53178">
    <property type="entry name" value="Peptidyl-tRNA hydrolase-like"/>
    <property type="match status" value="1"/>
</dbReference>
<dbReference type="PROSITE" id="PS01196">
    <property type="entry name" value="PEPT_TRNA_HYDROL_2"/>
    <property type="match status" value="1"/>
</dbReference>
<keyword id="KW-0963">Cytoplasm</keyword>
<keyword id="KW-0378">Hydrolase</keyword>
<keyword id="KW-0694">RNA-binding</keyword>
<keyword id="KW-0820">tRNA-binding</keyword>
<reference key="1">
    <citation type="journal article" date="2009" name="PLoS Pathog.">
        <title>Molecular evolutionary consequences of niche restriction in Francisella tularensis, a facultative intracellular pathogen.</title>
        <authorList>
            <person name="Larsson P."/>
            <person name="Elfsmark D."/>
            <person name="Svensson K."/>
            <person name="Wikstroem P."/>
            <person name="Forsman M."/>
            <person name="Brettin T."/>
            <person name="Keim P."/>
            <person name="Johansson A."/>
        </authorList>
    </citation>
    <scope>NUCLEOTIDE SEQUENCE [LARGE SCALE GENOMIC DNA]</scope>
    <source>
        <strain>FSC147</strain>
    </source>
</reference>
<protein>
    <recommendedName>
        <fullName evidence="1">Peptidyl-tRNA hydrolase</fullName>
        <shortName evidence="1">Pth</shortName>
        <ecNumber evidence="1">3.1.1.29</ecNumber>
    </recommendedName>
</protein>
<evidence type="ECO:0000255" key="1">
    <source>
        <dbReference type="HAMAP-Rule" id="MF_00083"/>
    </source>
</evidence>
<organism>
    <name type="scientific">Francisella tularensis subsp. mediasiatica (strain FSC147)</name>
    <dbReference type="NCBI Taxonomy" id="441952"/>
    <lineage>
        <taxon>Bacteria</taxon>
        <taxon>Pseudomonadati</taxon>
        <taxon>Pseudomonadota</taxon>
        <taxon>Gammaproteobacteria</taxon>
        <taxon>Thiotrichales</taxon>
        <taxon>Francisellaceae</taxon>
        <taxon>Francisella</taxon>
    </lineage>
</organism>
<comment type="function">
    <text evidence="1">Hydrolyzes ribosome-free peptidyl-tRNAs (with 1 or more amino acids incorporated), which drop off the ribosome during protein synthesis, or as a result of ribosome stalling.</text>
</comment>
<comment type="function">
    <text evidence="1">Catalyzes the release of premature peptidyl moieties from peptidyl-tRNA molecules trapped in stalled 50S ribosomal subunits, and thus maintains levels of free tRNAs and 50S ribosomes.</text>
</comment>
<comment type="catalytic activity">
    <reaction evidence="1">
        <text>an N-acyl-L-alpha-aminoacyl-tRNA + H2O = an N-acyl-L-amino acid + a tRNA + H(+)</text>
        <dbReference type="Rhea" id="RHEA:54448"/>
        <dbReference type="Rhea" id="RHEA-COMP:10123"/>
        <dbReference type="Rhea" id="RHEA-COMP:13883"/>
        <dbReference type="ChEBI" id="CHEBI:15377"/>
        <dbReference type="ChEBI" id="CHEBI:15378"/>
        <dbReference type="ChEBI" id="CHEBI:59874"/>
        <dbReference type="ChEBI" id="CHEBI:78442"/>
        <dbReference type="ChEBI" id="CHEBI:138191"/>
        <dbReference type="EC" id="3.1.1.29"/>
    </reaction>
</comment>
<comment type="subunit">
    <text evidence="1">Monomer.</text>
</comment>
<comment type="subcellular location">
    <subcellularLocation>
        <location evidence="1">Cytoplasm</location>
    </subcellularLocation>
</comment>
<comment type="similarity">
    <text evidence="1">Belongs to the PTH family.</text>
</comment>
<gene>
    <name evidence="1" type="primary">pth</name>
    <name type="ordered locus">FTM_1178</name>
</gene>
<feature type="chain" id="PRO_1000092943" description="Peptidyl-tRNA hydrolase">
    <location>
        <begin position="1"/>
        <end position="191"/>
    </location>
</feature>
<feature type="active site" description="Proton acceptor" evidence="1">
    <location>
        <position position="22"/>
    </location>
</feature>
<feature type="binding site" evidence="1">
    <location>
        <position position="17"/>
    </location>
    <ligand>
        <name>tRNA</name>
        <dbReference type="ChEBI" id="CHEBI:17843"/>
    </ligand>
</feature>
<feature type="binding site" evidence="1">
    <location>
        <position position="68"/>
    </location>
    <ligand>
        <name>tRNA</name>
        <dbReference type="ChEBI" id="CHEBI:17843"/>
    </ligand>
</feature>
<feature type="binding site" evidence="1">
    <location>
        <position position="70"/>
    </location>
    <ligand>
        <name>tRNA</name>
        <dbReference type="ChEBI" id="CHEBI:17843"/>
    </ligand>
</feature>
<feature type="binding site" evidence="1">
    <location>
        <position position="116"/>
    </location>
    <ligand>
        <name>tRNA</name>
        <dbReference type="ChEBI" id="CHEBI:17843"/>
    </ligand>
</feature>
<feature type="site" description="Discriminates between blocked and unblocked aminoacyl-tRNA" evidence="1">
    <location>
        <position position="12"/>
    </location>
</feature>
<feature type="site" description="Stabilizes the basic form of H active site to accept a proton" evidence="1">
    <location>
        <position position="95"/>
    </location>
</feature>
<sequence>MPKIKMIVGLGNIGKEYQDTRHNVGEWFIAKIAQDNNQSFSSNPKLNCNLAKVSIDYNNVVLVFPTTYMNNSGLAVSKVANFYKIAPAEILVVHDELDIDSGEIRLKKGGGHGGHNGLRSINQHLGTNDYLRLRIGIGHPGHKSKVANYVLSNPSIAQKKDIDSAIDNGICFLDDIINYKLEPVMQKLHTK</sequence>
<proteinExistence type="inferred from homology"/>
<name>PTH_FRATM</name>
<accession>B2SH51</accession>